<keyword id="KW-0067">ATP-binding</keyword>
<keyword id="KW-1070">Brassinosteroid signaling pathway</keyword>
<keyword id="KW-1003">Cell membrane</keyword>
<keyword id="KW-0325">Glycoprotein</keyword>
<keyword id="KW-0418">Kinase</keyword>
<keyword id="KW-0433">Leucine-rich repeat</keyword>
<keyword id="KW-0472">Membrane</keyword>
<keyword id="KW-0547">Nucleotide-binding</keyword>
<keyword id="KW-0675">Receptor</keyword>
<keyword id="KW-1185">Reference proteome</keyword>
<keyword id="KW-0677">Repeat</keyword>
<keyword id="KW-0723">Serine/threonine-protein kinase</keyword>
<keyword id="KW-0732">Signal</keyword>
<keyword id="KW-0808">Transferase</keyword>
<keyword id="KW-0812">Transmembrane</keyword>
<keyword id="KW-1133">Transmembrane helix</keyword>
<evidence type="ECO:0000250" key="1">
    <source>
        <dbReference type="UniProtKB" id="O22476"/>
    </source>
</evidence>
<evidence type="ECO:0000255" key="2"/>
<evidence type="ECO:0000255" key="3">
    <source>
        <dbReference type="PROSITE-ProRule" id="PRU00159"/>
    </source>
</evidence>
<evidence type="ECO:0000255" key="4">
    <source>
        <dbReference type="PROSITE-ProRule" id="PRU00498"/>
    </source>
</evidence>
<evidence type="ECO:0000256" key="5">
    <source>
        <dbReference type="SAM" id="MobiDB-lite"/>
    </source>
</evidence>
<evidence type="ECO:0000269" key="6">
    <source>
    </source>
</evidence>
<evidence type="ECO:0000269" key="7">
    <source>
    </source>
</evidence>
<evidence type="ECO:0000269" key="8">
    <source>
    </source>
</evidence>
<evidence type="ECO:0000269" key="9">
    <source>
    </source>
</evidence>
<evidence type="ECO:0000269" key="10">
    <source>
    </source>
</evidence>
<evidence type="ECO:0000269" key="11">
    <source>
    </source>
</evidence>
<evidence type="ECO:0000269" key="12">
    <source>
    </source>
</evidence>
<evidence type="ECO:0000269" key="13">
    <source ref="7"/>
</evidence>
<evidence type="ECO:0000303" key="14">
    <source>
    </source>
</evidence>
<evidence type="ECO:0000305" key="15"/>
<evidence type="ECO:0000305" key="16">
    <source>
    </source>
</evidence>
<evidence type="ECO:0000305" key="17">
    <source>
    </source>
</evidence>
<evidence type="ECO:0000312" key="18">
    <source>
        <dbReference type="EMBL" id="BAB68053.1"/>
    </source>
</evidence>
<evidence type="ECO:0000312" key="19">
    <source>
        <dbReference type="EMBL" id="BAF05991.1"/>
    </source>
</evidence>
<comment type="function">
    <text evidence="6 7 11 12 16 17">Receptor kinase involved brassinosteroid (BR) signal transduction. Regulates, in response to BR binding, a signaling cascade involved in plant development, promotion of cell elongation and flowering (Probable). Activates BR signaling by targeting and phosphorylating BSK3, a positive regulator of BR signaling (PubMed:26697897). Forms at the plasma membrane a receptor complex with BAK1 which is activated in response to brassinolide. Phosphorylates BAK1. Phosphorylates REM4.1, which reduces REM4.1 binding affinity to BAK1 and allows the formation and subsequent activation of the BRI1-BAK1 receptor complex (PubMed:27424498). Functions in various growth and developmental processes, such as internode elongation, bending of the lamina joint and skotomorphogenesis. Functions in internode elongation by inducing the formation of the intercalary meristem and the longitudinal elongation of internode cells (PubMed:11006334). Involved in organ development through the control of cell division and elongation. Does not seem essential for organ pattern formation or organ initiation (PubMed:16407447).</text>
</comment>
<comment type="catalytic activity">
    <reaction evidence="15">
        <text>L-seryl-[protein] + ATP = O-phospho-L-seryl-[protein] + ADP + H(+)</text>
        <dbReference type="Rhea" id="RHEA:17989"/>
        <dbReference type="Rhea" id="RHEA-COMP:9863"/>
        <dbReference type="Rhea" id="RHEA-COMP:11604"/>
        <dbReference type="ChEBI" id="CHEBI:15378"/>
        <dbReference type="ChEBI" id="CHEBI:29999"/>
        <dbReference type="ChEBI" id="CHEBI:30616"/>
        <dbReference type="ChEBI" id="CHEBI:83421"/>
        <dbReference type="ChEBI" id="CHEBI:456216"/>
        <dbReference type="EC" id="2.7.11.1"/>
    </reaction>
</comment>
<comment type="catalytic activity">
    <reaction evidence="15">
        <text>L-threonyl-[protein] + ATP = O-phospho-L-threonyl-[protein] + ADP + H(+)</text>
        <dbReference type="Rhea" id="RHEA:46608"/>
        <dbReference type="Rhea" id="RHEA-COMP:11060"/>
        <dbReference type="Rhea" id="RHEA-COMP:11605"/>
        <dbReference type="ChEBI" id="CHEBI:15378"/>
        <dbReference type="ChEBI" id="CHEBI:30013"/>
        <dbReference type="ChEBI" id="CHEBI:30616"/>
        <dbReference type="ChEBI" id="CHEBI:61977"/>
        <dbReference type="ChEBI" id="CHEBI:456216"/>
        <dbReference type="EC" id="2.7.11.1"/>
    </reaction>
</comment>
<comment type="subunit">
    <text evidence="9 10 11 12 13">Interacts with BIP103 and BIP131 (Ref.7). Interacts with BAK1 (PubMed:19754838, PubMed:27424498). Interacts with BSK3 (PubMed:26697897). Interacts with SERK2 (PubMed:19754838, PubMed:24482436).</text>
</comment>
<comment type="subcellular location">
    <subcellularLocation>
        <location evidence="15">Cell membrane</location>
        <topology evidence="15">Single-pass type I membrane protein</topology>
    </subcellularLocation>
</comment>
<comment type="tissue specificity">
    <text evidence="7">Highly expressed in shoots. Expressed at low levels in roots.</text>
</comment>
<comment type="induction">
    <text evidence="13">Down-regulated by brassinolide.</text>
</comment>
<comment type="domain">
    <text evidence="1">Contains two pairs of conservatively spaced Cys (Cys pair 1 and 2) possibly involved in forming some heterodimers.</text>
</comment>
<comment type="disruption phenotype">
    <text evidence="6">Dwarf plants due to the lack of internode elongation. Insensitivity to brassinolide.</text>
</comment>
<comment type="biotechnology">
    <text evidence="8">Over-expression of a truncated form of BRI1 induces partial suppression of endogenous BRI1 expression, leading to an erect leaf phenotype. The estimated grain yield of the transformants is about 30 per cent higher than that of wild type at high density planting.</text>
</comment>
<comment type="similarity">
    <text evidence="3">Belongs to the protein kinase superfamily. Ser/Thr protein kinase family.</text>
</comment>
<name>BRI1_ORYSJ</name>
<feature type="signal peptide" evidence="2">
    <location>
        <begin position="1"/>
        <end position="24"/>
    </location>
</feature>
<feature type="chain" id="PRO_5008973918" description="Brassinosteroid LRR receptor kinase BRI1" evidence="2">
    <location>
        <begin position="25"/>
        <end position="1121"/>
    </location>
</feature>
<feature type="transmembrane region" description="Helical" evidence="2">
    <location>
        <begin position="719"/>
        <end position="739"/>
    </location>
</feature>
<feature type="repeat" description="LRR 1" evidence="2">
    <location>
        <begin position="90"/>
        <end position="114"/>
    </location>
</feature>
<feature type="repeat" description="LRR 2" evidence="2">
    <location>
        <begin position="116"/>
        <end position="142"/>
    </location>
</feature>
<feature type="repeat" description="LRR 3" evidence="2">
    <location>
        <begin position="144"/>
        <end position="167"/>
    </location>
</feature>
<feature type="repeat" description="LRR 4" evidence="2">
    <location>
        <begin position="170"/>
        <end position="193"/>
    </location>
</feature>
<feature type="repeat" description="LRR 5" evidence="2">
    <location>
        <begin position="197"/>
        <end position="221"/>
    </location>
</feature>
<feature type="repeat" description="LRR 6" evidence="2">
    <location>
        <begin position="223"/>
        <end position="243"/>
    </location>
</feature>
<feature type="repeat" description="LRR 7" evidence="2">
    <location>
        <begin position="244"/>
        <end position="268"/>
    </location>
</feature>
<feature type="repeat" description="LRR 8" evidence="2">
    <location>
        <begin position="269"/>
        <end position="292"/>
    </location>
</feature>
<feature type="repeat" description="LRR 9" evidence="2">
    <location>
        <begin position="294"/>
        <end position="317"/>
    </location>
</feature>
<feature type="repeat" description="LRR 10" evidence="2">
    <location>
        <begin position="318"/>
        <end position="341"/>
    </location>
</feature>
<feature type="repeat" description="LRR 11" evidence="2">
    <location>
        <begin position="343"/>
        <end position="367"/>
    </location>
</feature>
<feature type="repeat" description="LRR 12" evidence="2">
    <location>
        <begin position="369"/>
        <end position="391"/>
    </location>
</feature>
<feature type="repeat" description="LRR 13" evidence="2">
    <location>
        <begin position="392"/>
        <end position="415"/>
    </location>
</feature>
<feature type="repeat" description="LRR 14" evidence="2">
    <location>
        <begin position="416"/>
        <end position="439"/>
    </location>
</feature>
<feature type="repeat" description="LRR 15" evidence="2">
    <location>
        <begin position="441"/>
        <end position="463"/>
    </location>
</feature>
<feature type="repeat" description="LRR 16" evidence="2">
    <location>
        <begin position="464"/>
        <end position="487"/>
    </location>
</feature>
<feature type="repeat" description="LRR 17" evidence="2">
    <location>
        <begin position="489"/>
        <end position="511"/>
    </location>
</feature>
<feature type="repeat" description="LRR 18" evidence="2">
    <location>
        <begin position="541"/>
        <end position="564"/>
    </location>
</feature>
<feature type="repeat" description="LRR 19" evidence="2">
    <location>
        <begin position="580"/>
        <end position="603"/>
    </location>
</feature>
<feature type="repeat" description="LRR 20" evidence="2">
    <location>
        <begin position="604"/>
        <end position="628"/>
    </location>
</feature>
<feature type="repeat" description="LRR 21" evidence="2">
    <location>
        <begin position="629"/>
        <end position="651"/>
    </location>
</feature>
<feature type="repeat" description="LRR 22" evidence="2">
    <location>
        <begin position="652"/>
        <end position="676"/>
    </location>
</feature>
<feature type="domain" description="Protein kinase" evidence="3">
    <location>
        <begin position="807"/>
        <end position="1083"/>
    </location>
</feature>
<feature type="region of interest" description="Disordered" evidence="5">
    <location>
        <begin position="693"/>
        <end position="712"/>
    </location>
</feature>
<feature type="short sequence motif" description="Cys pair 1" evidence="1">
    <location>
        <begin position="54"/>
        <end position="61"/>
    </location>
</feature>
<feature type="short sequence motif" description="Cys pair 2" evidence="1">
    <location>
        <begin position="689"/>
        <end position="696"/>
    </location>
</feature>
<feature type="active site" description="Proton acceptor" evidence="3">
    <location>
        <position position="933"/>
    </location>
</feature>
<feature type="binding site" evidence="1">
    <location>
        <position position="525"/>
    </location>
    <ligand>
        <name>brassinolide</name>
        <dbReference type="ChEBI" id="CHEBI:28277"/>
    </ligand>
</feature>
<feature type="binding site" evidence="1">
    <location>
        <position position="569"/>
    </location>
    <ligand>
        <name>brassinolide</name>
        <dbReference type="ChEBI" id="CHEBI:28277"/>
    </ligand>
</feature>
<feature type="binding site" evidence="3">
    <location>
        <begin position="813"/>
        <end position="821"/>
    </location>
    <ligand>
        <name>ATP</name>
        <dbReference type="ChEBI" id="CHEBI:30616"/>
    </ligand>
</feature>
<feature type="binding site" evidence="3">
    <location>
        <position position="835"/>
    </location>
    <ligand>
        <name>ATP</name>
        <dbReference type="ChEBI" id="CHEBI:30616"/>
    </ligand>
</feature>
<feature type="binding site" evidence="1">
    <location>
        <begin position="881"/>
        <end position="883"/>
    </location>
    <ligand>
        <name>ATP</name>
        <dbReference type="ChEBI" id="CHEBI:30616"/>
    </ligand>
</feature>
<feature type="binding site" evidence="1">
    <location>
        <begin position="887"/>
        <end position="890"/>
    </location>
    <ligand>
        <name>ATP</name>
        <dbReference type="ChEBI" id="CHEBI:30616"/>
    </ligand>
</feature>
<feature type="binding site" evidence="1">
    <location>
        <begin position="933"/>
        <end position="938"/>
    </location>
    <ligand>
        <name>ATP</name>
        <dbReference type="ChEBI" id="CHEBI:30616"/>
    </ligand>
</feature>
<feature type="binding site" evidence="1">
    <location>
        <position position="951"/>
    </location>
    <ligand>
        <name>ATP</name>
        <dbReference type="ChEBI" id="CHEBI:30616"/>
    </ligand>
</feature>
<feature type="glycosylation site" description="N-linked (GlcNAc...) asparagine" evidence="4">
    <location>
        <position position="102"/>
    </location>
</feature>
<feature type="glycosylation site" description="N-linked (GlcNAc...) asparagine" evidence="4">
    <location>
        <position position="151"/>
    </location>
</feature>
<feature type="glycosylation site" description="N-linked (GlcNAc...) asparagine" evidence="4">
    <location>
        <position position="218"/>
    </location>
</feature>
<feature type="glycosylation site" description="N-linked (GlcNAc...) asparagine" evidence="4">
    <location>
        <position position="251"/>
    </location>
</feature>
<feature type="glycosylation site" description="N-linked (GlcNAc...) asparagine" evidence="4">
    <location>
        <position position="275"/>
    </location>
</feature>
<feature type="glycosylation site" description="N-linked (GlcNAc...) asparagine" evidence="4">
    <location>
        <position position="280"/>
    </location>
</feature>
<feature type="glycosylation site" description="N-linked (GlcNAc...) asparagine" evidence="4">
    <location>
        <position position="307"/>
    </location>
</feature>
<feature type="glycosylation site" description="N-linked (GlcNAc...) asparagine" evidence="4">
    <location>
        <position position="366"/>
    </location>
</feature>
<feature type="glycosylation site" description="N-linked (GlcNAc...) asparagine" evidence="4">
    <location>
        <position position="381"/>
    </location>
</feature>
<feature type="glycosylation site" description="N-linked (GlcNAc...) asparagine" evidence="4">
    <location>
        <position position="473"/>
    </location>
</feature>
<feature type="glycosylation site" description="N-linked (GlcNAc...) asparagine" evidence="4">
    <location>
        <position position="501"/>
    </location>
</feature>
<feature type="glycosylation site" description="N-linked (GlcNAc...) asparagine" evidence="4">
    <location>
        <position position="564"/>
    </location>
</feature>
<feature type="glycosylation site" description="N-linked (GlcNAc...) asparagine" evidence="4">
    <location>
        <position position="580"/>
    </location>
</feature>
<feature type="glycosylation site" description="N-linked (GlcNAc...) asparagine" evidence="4">
    <location>
        <position position="658"/>
    </location>
</feature>
<feature type="glycosylation site" description="N-linked (GlcNAc...) asparagine" evidence="4">
    <location>
        <position position="665"/>
    </location>
</feature>
<feature type="glycosylation site" description="N-linked (GlcNAc...) asparagine" evidence="4">
    <location>
        <position position="684"/>
    </location>
</feature>
<feature type="mutagenesis site" description="In d61-3; severe dwarf phenotype. Sterile plants." evidence="7">
    <original>H</original>
    <variation>P</variation>
    <location>
        <position position="420"/>
    </location>
</feature>
<feature type="mutagenesis site" description="In d61-5; severe dwarf phenotype. Sterile plants." evidence="7">
    <original>N</original>
    <variation>Y</variation>
    <location>
        <position position="426"/>
    </location>
</feature>
<feature type="mutagenesis site" description="In d61-7; mild dwarf phenotype. Fertile plants." evidence="7">
    <original>A</original>
    <variation>V</variation>
    <location>
        <position position="467"/>
    </location>
</feature>
<feature type="mutagenesis site" description="In d61-2; mild dwarf phenotype. Fertile plants. Insensitivity to brassinolide." evidence="6">
    <original>V</original>
    <variation>M</variation>
    <location>
        <position position="491"/>
    </location>
</feature>
<feature type="mutagenesis site" description="In d61-8; mild dwarf phenotype. Fertile plants." evidence="7">
    <original>G</original>
    <variation>E</variation>
    <location>
        <position position="522"/>
    </location>
</feature>
<feature type="mutagenesis site" description="In d61-9; mild dwarf phenotype. Fertile plants." evidence="7">
    <original>G</original>
    <variation>D</variation>
    <location>
        <position position="539"/>
    </location>
</feature>
<feature type="mutagenesis site" description="In d61-10; mild dwarf phenotype. Fertile plants." evidence="7">
    <original>T</original>
    <variation>I</variation>
    <location>
        <position position="854"/>
    </location>
</feature>
<feature type="mutagenesis site" description="In d61-1; intermediate dwarf phenotype. Fertile plants. Insensitivity to brassinolide." evidence="6">
    <original>T</original>
    <variation>I</variation>
    <location>
        <position position="989"/>
    </location>
</feature>
<sequence length="1121" mass="120181">MDSLWAAIAALFVAAAVVVRGAAAADDAQLLEEFRQAVPNQAALKGWSGGDGACRFPGAGCRNGRLTSLSLAGVPLNAEFRAVAATLLQLGSVEVLSLRGANVSGALSAAGGARCGSKLQALDLSGNAALRGSVADVAALASACGGLKTLNLSGDAVGAAKVGGGGGPGFAGLDSLDLSNNKITDDSDLRWMVDAGVGAVRWLDLALNRISGVPEFTNCSGLQYLDLSGNLIVGEVPGGALSDCRGLKVLNLSFNHLAGVFPPDIAGLTSLNALNLSNNNFSGELPGEAFAKLQQLTALSLSFNHFNGSIPDTVASLPELQQLDLSSNTFSGTIPSSLCQDPNSKLHLLYLQNNYLTGGIPDAVSNCTSLVSLDLSLNYINGSIPASLGDLGNLQDLILWQNELEGEIPASLSRIQGLEHLILDYNGLTGSIPPELAKCTKLNWISLASNRLSGPIPSWLGKLSYLAILKLSNNSFSGPIPPELGDCQSLVWLDLNSNQLNGSIPKELAKQSGKMNVGLIVGRPYVYLRNDELSSECRGKGSLLEFTSIRPDDLSRMPSKKLCNFTRMYVGSTEYTFNKNGSMIFLDLSYNQLDSAIPGELGDMFYLMIMNLGHNLLSGTIPSRLAEAKKLAVLDLSYNQLEGPIPNSFSALSLSEINLSNNQLNGTIPELGSLATFPKSQYENNTGLCGFPLPPCDHSSPRSSNDHQSHRRQASMASSIAMGLLFSLFCIIVIIIAIGSKRRRLKNEEASTSRDIYIDSRSHSATMNSDWRQNLSGTNLLSINLAAFEKPLQNLTLADLVEATNGFHIACQIGSGGFGDVYKAQLKDGKVVAIKKLIHVSGQGDREFTAEMETIGKIKHRNLVPLLGYCKAGEERLLVYDYMKFGSLEDVLHDRKKIGKKLNWEARRKIAVGAARGLAFLHHNCIPHIIHRDMKSSNVLIDEQLEARVSDFGMARLMSVVDTHLSVSTLAGTPGYVPPEYYQSFRCTTKGDVYSYGVVLLELLTGKPPTDSADFGEDNNLVGWVKQHTKLKITDVFDPELLKEDPSVELELLEHLKIACACLDDRPSRRPTMLKVMAMFKEIQAGSTVDSKTSSAAAGSIDEGGYGVLDMPLREAKEEKD</sequence>
<gene>
    <name evidence="14" type="primary">BRI1</name>
    <name evidence="14" type="synonym">D61</name>
    <name evidence="19" type="ordered locus">Os01g0718300</name>
    <name evidence="15" type="ordered locus">LOC_Os01g52050</name>
    <name evidence="18" type="ORF">P0480C01.18-1</name>
</gene>
<organism>
    <name type="scientific">Oryza sativa subsp. japonica</name>
    <name type="common">Rice</name>
    <dbReference type="NCBI Taxonomy" id="39947"/>
    <lineage>
        <taxon>Eukaryota</taxon>
        <taxon>Viridiplantae</taxon>
        <taxon>Streptophyta</taxon>
        <taxon>Embryophyta</taxon>
        <taxon>Tracheophyta</taxon>
        <taxon>Spermatophyta</taxon>
        <taxon>Magnoliopsida</taxon>
        <taxon>Liliopsida</taxon>
        <taxon>Poales</taxon>
        <taxon>Poaceae</taxon>
        <taxon>BOP clade</taxon>
        <taxon>Oryzoideae</taxon>
        <taxon>Oryzeae</taxon>
        <taxon>Oryzinae</taxon>
        <taxon>Oryza</taxon>
        <taxon>Oryza sativa</taxon>
    </lineage>
</organism>
<accession>Q942F3</accession>
<protein>
    <recommendedName>
        <fullName evidence="15">Brassinosteroid LRR receptor kinase BRI1</fullName>
        <ecNumber evidence="15">2.7.11.1</ecNumber>
    </recommendedName>
    <alternativeName>
        <fullName evidence="14">Protein BRASSINOSTEROID INSENSITIVE 1 homolog</fullName>
        <shortName evidence="14">OsBRI1</shortName>
    </alternativeName>
    <alternativeName>
        <fullName evidence="14">Protein DWARF 61</fullName>
    </alternativeName>
</protein>
<reference key="1">
    <citation type="journal article" date="2002" name="Nature">
        <title>The genome sequence and structure of rice chromosome 1.</title>
        <authorList>
            <person name="Sasaki T."/>
            <person name="Matsumoto T."/>
            <person name="Yamamoto K."/>
            <person name="Sakata K."/>
            <person name="Baba T."/>
            <person name="Katayose Y."/>
            <person name="Wu J."/>
            <person name="Niimura Y."/>
            <person name="Cheng Z."/>
            <person name="Nagamura Y."/>
            <person name="Antonio B.A."/>
            <person name="Kanamori H."/>
            <person name="Hosokawa S."/>
            <person name="Masukawa M."/>
            <person name="Arikawa K."/>
            <person name="Chiden Y."/>
            <person name="Hayashi M."/>
            <person name="Okamoto M."/>
            <person name="Ando T."/>
            <person name="Aoki H."/>
            <person name="Arita K."/>
            <person name="Hamada M."/>
            <person name="Harada C."/>
            <person name="Hijishita S."/>
            <person name="Honda M."/>
            <person name="Ichikawa Y."/>
            <person name="Idonuma A."/>
            <person name="Iijima M."/>
            <person name="Ikeda M."/>
            <person name="Ikeno M."/>
            <person name="Ito S."/>
            <person name="Ito T."/>
            <person name="Ito Y."/>
            <person name="Ito Y."/>
            <person name="Iwabuchi A."/>
            <person name="Kamiya K."/>
            <person name="Karasawa W."/>
            <person name="Katagiri S."/>
            <person name="Kikuta A."/>
            <person name="Kobayashi N."/>
            <person name="Kono I."/>
            <person name="Machita K."/>
            <person name="Maehara T."/>
            <person name="Mizuno H."/>
            <person name="Mizubayashi T."/>
            <person name="Mukai Y."/>
            <person name="Nagasaki H."/>
            <person name="Nakashima M."/>
            <person name="Nakama Y."/>
            <person name="Nakamichi Y."/>
            <person name="Nakamura M."/>
            <person name="Namiki N."/>
            <person name="Negishi M."/>
            <person name="Ohta I."/>
            <person name="Ono N."/>
            <person name="Saji S."/>
            <person name="Sakai K."/>
            <person name="Shibata M."/>
            <person name="Shimokawa T."/>
            <person name="Shomura A."/>
            <person name="Song J."/>
            <person name="Takazaki Y."/>
            <person name="Terasawa K."/>
            <person name="Tsuji K."/>
            <person name="Waki K."/>
            <person name="Yamagata H."/>
            <person name="Yamane H."/>
            <person name="Yoshiki S."/>
            <person name="Yoshihara R."/>
            <person name="Yukawa K."/>
            <person name="Zhong H."/>
            <person name="Iwama H."/>
            <person name="Endo T."/>
            <person name="Ito H."/>
            <person name="Hahn J.H."/>
            <person name="Kim H.-I."/>
            <person name="Eun M.-Y."/>
            <person name="Yano M."/>
            <person name="Jiang J."/>
            <person name="Gojobori T."/>
        </authorList>
    </citation>
    <scope>NUCLEOTIDE SEQUENCE [LARGE SCALE GENOMIC DNA]</scope>
    <source>
        <strain>cv. Nipponbare</strain>
    </source>
</reference>
<reference key="2">
    <citation type="journal article" date="2005" name="Nature">
        <title>The map-based sequence of the rice genome.</title>
        <authorList>
            <consortium name="International rice genome sequencing project (IRGSP)"/>
        </authorList>
    </citation>
    <scope>NUCLEOTIDE SEQUENCE [LARGE SCALE GENOMIC DNA]</scope>
    <source>
        <strain>cv. Nipponbare</strain>
    </source>
</reference>
<reference key="3">
    <citation type="journal article" date="2008" name="Nucleic Acids Res.">
        <title>The rice annotation project database (RAP-DB): 2008 update.</title>
        <authorList>
            <consortium name="The rice annotation project (RAP)"/>
        </authorList>
    </citation>
    <scope>GENOME REANNOTATION</scope>
    <source>
        <strain>cv. Nipponbare</strain>
    </source>
</reference>
<reference key="4">
    <citation type="journal article" date="2013" name="Rice">
        <title>Improvement of the Oryza sativa Nipponbare reference genome using next generation sequence and optical map data.</title>
        <authorList>
            <person name="Kawahara Y."/>
            <person name="de la Bastide M."/>
            <person name="Hamilton J.P."/>
            <person name="Kanamori H."/>
            <person name="McCombie W.R."/>
            <person name="Ouyang S."/>
            <person name="Schwartz D.C."/>
            <person name="Tanaka T."/>
            <person name="Wu J."/>
            <person name="Zhou S."/>
            <person name="Childs K.L."/>
            <person name="Davidson R.M."/>
            <person name="Lin H."/>
            <person name="Quesada-Ocampo L."/>
            <person name="Vaillancourt B."/>
            <person name="Sakai H."/>
            <person name="Lee S.S."/>
            <person name="Kim J."/>
            <person name="Numa H."/>
            <person name="Itoh T."/>
            <person name="Buell C.R."/>
            <person name="Matsumoto T."/>
        </authorList>
    </citation>
    <scope>GENOME REANNOTATION</scope>
    <source>
        <strain>cv. Nipponbare</strain>
    </source>
</reference>
<reference key="5">
    <citation type="journal article" date="2003" name="Science">
        <title>Collection, mapping, and annotation of over 28,000 cDNA clones from japonica rice.</title>
        <authorList>
            <consortium name="The rice full-length cDNA consortium"/>
        </authorList>
    </citation>
    <scope>NUCLEOTIDE SEQUENCE [LARGE SCALE MRNA]</scope>
    <source>
        <strain>cv. Nipponbare</strain>
    </source>
</reference>
<reference key="6">
    <citation type="journal article" date="2000" name="Plant Cell">
        <title>Loss of function of a rice brassinosteroid insensitive1 homolog prevents internode elongation and bending of the lamina joint.</title>
        <authorList>
            <person name="Yamamuro C."/>
            <person name="Ihara Y."/>
            <person name="Wu X."/>
            <person name="Noguchi T."/>
            <person name="Fujioka S."/>
            <person name="Takatsuto S."/>
            <person name="Ashikari M."/>
            <person name="Kitano H."/>
            <person name="Matsuoka M."/>
        </authorList>
    </citation>
    <scope>FUNCTION</scope>
    <scope>MUTAGENESIS OF VAL-491 AND THR-989</scope>
    <scope>DISRUPTION PHENOTYPE</scope>
    <source>
        <strain>cv. Taichung 65</strain>
    </source>
</reference>
<reference key="7">
    <citation type="journal article" date="2004" name="Plant Biotechnol.">
        <title>Two proton pump interactors identified from a direct phosphorylation screening of a rice cDNA library by using a recombinant BRI1 receptor kinase.</title>
        <authorList>
            <person name="Hirabayashi S."/>
            <person name="Matsushita Y."/>
            <person name="Sato M."/>
            <person name="Ohi R."/>
            <person name="Kasahara M."/>
            <person name="Abe H."/>
            <person name="Nyunoya H."/>
        </authorList>
    </citation>
    <scope>INTERACTION WITH BIP103 AND BIP131</scope>
    <scope>INDUCTION</scope>
</reference>
<reference key="8">
    <citation type="journal article" date="2006" name="Plant Physiol.">
        <title>The role of OsBRI1 and its homologous genes, OsBRL1 and OsBRL3, in rice.</title>
        <authorList>
            <person name="Nakamura A."/>
            <person name="Fujioka S."/>
            <person name="Sunohara H."/>
            <person name="Kamiya N."/>
            <person name="Hong Z."/>
            <person name="Inukai Y."/>
            <person name="Miura K."/>
            <person name="Takatsuto S."/>
            <person name="Yoshida S."/>
            <person name="Ueguchi-Tanaka M."/>
            <person name="Hasegawa Y."/>
            <person name="Kitano H."/>
            <person name="Matsuoka M."/>
        </authorList>
    </citation>
    <scope>FUNCTION</scope>
    <scope>TISSUE SPECIFICITY</scope>
    <scope>MUTAGENESIS OF HIS-420; ASN-426; ALA-467; GLY-522; GLY-539 AND THR-854</scope>
</reference>
<reference key="9">
    <citation type="journal article" date="2006" name="Plant Physiol.">
        <title>Morphological alteration caused by brassinosteroid insensitivity increases the biomass and grain production of rice.</title>
        <authorList>
            <person name="Morinaka Y."/>
            <person name="Sakamoto T."/>
            <person name="Inukai Y."/>
            <person name="Agetsuma M."/>
            <person name="Kitano H."/>
            <person name="Ashikari M."/>
            <person name="Matsuoka M."/>
        </authorList>
    </citation>
    <scope>BIOTECHNOLOGY</scope>
</reference>
<reference key="10">
    <citation type="journal article" date="2009" name="Plant Biotechnol. J.">
        <title>Engineering OsBAK1 gene as a molecular tool to improve rice architecture for high yield.</title>
        <authorList>
            <person name="Li D."/>
            <person name="Wang L."/>
            <person name="Wang M."/>
            <person name="Xu Y.Y."/>
            <person name="Luo W."/>
            <person name="Liu Y.J."/>
            <person name="Xu Z.H."/>
            <person name="Li J."/>
            <person name="Chong K."/>
        </authorList>
    </citation>
    <scope>INTERACTION WITH BAK1 AND SERK2</scope>
</reference>
<reference key="11">
    <citation type="journal article" date="2014" name="Mol. Plant">
        <title>An XA21-associated kinase (OsSERK2) regulates immunity mediated by the XA21 and XA3 immune receptors.</title>
        <authorList>
            <person name="Chen X."/>
            <person name="Zuo S."/>
            <person name="Schwessinger B."/>
            <person name="Chern M."/>
            <person name="Canlas P.E."/>
            <person name="Ruan D."/>
            <person name="Zhou X."/>
            <person name="Wang J."/>
            <person name="Daudi A."/>
            <person name="Petzold C.J."/>
            <person name="Heazlewood J.L."/>
            <person name="Ronald P.C."/>
        </authorList>
    </citation>
    <scope>INTERACTION WITH SERK2</scope>
</reference>
<reference key="12">
    <citation type="journal article" date="2016" name="Dev. Cell">
        <title>OsREM4.1 interacts with OsSERK1 to coordinate the interlinking between abscisic acid and brassinosteroid signaling in rice.</title>
        <authorList>
            <person name="Gui J."/>
            <person name="Zheng S."/>
            <person name="Liu C."/>
            <person name="Shen J."/>
            <person name="Li J."/>
            <person name="Li L."/>
        </authorList>
    </citation>
    <scope>FUNCTION</scope>
    <scope>INTERACTION WITH BAK1</scope>
</reference>
<reference key="13">
    <citation type="journal article" date="2016" name="Plant Physiol.">
        <title>OsBRI1 activates BR signaling by preventing binding between the TPR and kinase domains of OsBSK3 via phosphorylation.</title>
        <authorList>
            <person name="Zhang B."/>
            <person name="Wang X."/>
            <person name="Zhao Z."/>
            <person name="Wang R."/>
            <person name="Huang X."/>
            <person name="Zhu Y."/>
            <person name="Yuan L."/>
            <person name="Wang Y."/>
            <person name="Xu X."/>
            <person name="Burlingame A.L."/>
            <person name="Gao Y."/>
            <person name="Sun Y."/>
            <person name="Tang W."/>
        </authorList>
    </citation>
    <scope>FUNCTION</scope>
    <scope>INTERACTION WITH BSK3</scope>
</reference>
<dbReference type="EC" id="2.7.11.1" evidence="15"/>
<dbReference type="EMBL" id="AP003453">
    <property type="protein sequence ID" value="BAB68053.1"/>
    <property type="molecule type" value="Genomic_DNA"/>
</dbReference>
<dbReference type="EMBL" id="AP008207">
    <property type="protein sequence ID" value="BAF05991.1"/>
    <property type="molecule type" value="Genomic_DNA"/>
</dbReference>
<dbReference type="EMBL" id="AP014957">
    <property type="protein sequence ID" value="BAS74050.1"/>
    <property type="molecule type" value="Genomic_DNA"/>
</dbReference>
<dbReference type="EMBL" id="AK073838">
    <property type="protein sequence ID" value="BAG93669.1"/>
    <property type="molecule type" value="mRNA"/>
</dbReference>
<dbReference type="RefSeq" id="XP_015621030.1">
    <property type="nucleotide sequence ID" value="XM_015765544.1"/>
</dbReference>
<dbReference type="SMR" id="Q942F3"/>
<dbReference type="FunCoup" id="Q942F3">
    <property type="interactions" value="1847"/>
</dbReference>
<dbReference type="STRING" id="39947.Q942F3"/>
<dbReference type="GlyCosmos" id="Q942F3">
    <property type="glycosylation" value="16 sites, No reported glycans"/>
</dbReference>
<dbReference type="PaxDb" id="39947-Q942F3"/>
<dbReference type="EnsemblPlants" id="Os01t0718300-01">
    <property type="protein sequence ID" value="Os01t0718300-01"/>
    <property type="gene ID" value="Os01g0718300"/>
</dbReference>
<dbReference type="EnsemblPlants" id="Os01t0718300-02">
    <property type="protein sequence ID" value="Os01t0718300-02"/>
    <property type="gene ID" value="Os01g0718300"/>
</dbReference>
<dbReference type="Gramene" id="Os01t0718300-01">
    <property type="protein sequence ID" value="Os01t0718300-01"/>
    <property type="gene ID" value="Os01g0718300"/>
</dbReference>
<dbReference type="Gramene" id="Os01t0718300-02">
    <property type="protein sequence ID" value="Os01t0718300-02"/>
    <property type="gene ID" value="Os01g0718300"/>
</dbReference>
<dbReference type="KEGG" id="dosa:Os01g0718300"/>
<dbReference type="eggNOG" id="ENOG502QRF2">
    <property type="taxonomic scope" value="Eukaryota"/>
</dbReference>
<dbReference type="HOGENOM" id="CLU_000288_22_4_1"/>
<dbReference type="InParanoid" id="Q942F3"/>
<dbReference type="OMA" id="GWVKLHA"/>
<dbReference type="OrthoDB" id="1371922at2759"/>
<dbReference type="Proteomes" id="UP000000763">
    <property type="component" value="Chromosome 1"/>
</dbReference>
<dbReference type="Proteomes" id="UP000059680">
    <property type="component" value="Chromosome 1"/>
</dbReference>
<dbReference type="ExpressionAtlas" id="Q942F3">
    <property type="expression patterns" value="baseline and differential"/>
</dbReference>
<dbReference type="GO" id="GO:0005886">
    <property type="term" value="C:plasma membrane"/>
    <property type="evidence" value="ECO:0000318"/>
    <property type="project" value="GO_Central"/>
</dbReference>
<dbReference type="GO" id="GO:0005524">
    <property type="term" value="F:ATP binding"/>
    <property type="evidence" value="ECO:0007669"/>
    <property type="project" value="UniProtKB-KW"/>
</dbReference>
<dbReference type="GO" id="GO:0106310">
    <property type="term" value="F:protein serine kinase activity"/>
    <property type="evidence" value="ECO:0007669"/>
    <property type="project" value="RHEA"/>
</dbReference>
<dbReference type="GO" id="GO:0004674">
    <property type="term" value="F:protein serine/threonine kinase activity"/>
    <property type="evidence" value="ECO:0000318"/>
    <property type="project" value="GO_Central"/>
</dbReference>
<dbReference type="GO" id="GO:0038023">
    <property type="term" value="F:signaling receptor activity"/>
    <property type="evidence" value="ECO:0000318"/>
    <property type="project" value="GO_Central"/>
</dbReference>
<dbReference type="GO" id="GO:0009742">
    <property type="term" value="P:brassinosteroid mediated signaling pathway"/>
    <property type="evidence" value="ECO:0000315"/>
    <property type="project" value="Gramene"/>
</dbReference>
<dbReference type="GO" id="GO:0009729">
    <property type="term" value="P:detection of brassinosteroid stimulus"/>
    <property type="evidence" value="ECO:0000315"/>
    <property type="project" value="Gramene"/>
</dbReference>
<dbReference type="GO" id="GO:0009755">
    <property type="term" value="P:hormone-mediated signaling pathway"/>
    <property type="evidence" value="ECO:0000318"/>
    <property type="project" value="GO_Central"/>
</dbReference>
<dbReference type="GO" id="GO:0001578">
    <property type="term" value="P:microtubule bundle formation"/>
    <property type="evidence" value="ECO:0000315"/>
    <property type="project" value="Gramene"/>
</dbReference>
<dbReference type="GO" id="GO:0009647">
    <property type="term" value="P:skotomorphogenesis"/>
    <property type="evidence" value="ECO:0000315"/>
    <property type="project" value="Gramene"/>
</dbReference>
<dbReference type="CDD" id="cd14066">
    <property type="entry name" value="STKc_IRAK"/>
    <property type="match status" value="1"/>
</dbReference>
<dbReference type="FunFam" id="1.10.510.10:FF:000291">
    <property type="entry name" value="Brassinosteroid LRR receptor kinase"/>
    <property type="match status" value="1"/>
</dbReference>
<dbReference type="FunFam" id="3.80.10.10:FF:000819">
    <property type="entry name" value="Brassinosteroid LRR receptor kinase BRI1"/>
    <property type="match status" value="1"/>
</dbReference>
<dbReference type="FunFam" id="3.80.10.10:FF:000383">
    <property type="entry name" value="Leucine-rich repeat receptor protein kinase EMS1"/>
    <property type="match status" value="1"/>
</dbReference>
<dbReference type="FunFam" id="3.80.10.10:FF:000041">
    <property type="entry name" value="LRR receptor-like serine/threonine-protein kinase ERECTA"/>
    <property type="match status" value="2"/>
</dbReference>
<dbReference type="FunFam" id="3.80.10.10:FF:000470">
    <property type="entry name" value="LRR receptor-like serine/threonine-protein kinase RPK2"/>
    <property type="match status" value="1"/>
</dbReference>
<dbReference type="FunFam" id="3.30.1490.310:FF:000001">
    <property type="entry name" value="Serine/threonine-protein kinase BRI1-like 1"/>
    <property type="match status" value="1"/>
</dbReference>
<dbReference type="FunFam" id="3.30.200.20:FF:000150">
    <property type="entry name" value="serine/threonine-protein kinase BRI1-like 2"/>
    <property type="match status" value="1"/>
</dbReference>
<dbReference type="Gene3D" id="3.30.1490.310">
    <property type="match status" value="1"/>
</dbReference>
<dbReference type="Gene3D" id="3.30.200.20">
    <property type="entry name" value="Phosphorylase Kinase, domain 1"/>
    <property type="match status" value="1"/>
</dbReference>
<dbReference type="Gene3D" id="3.80.10.10">
    <property type="entry name" value="Ribonuclease Inhibitor"/>
    <property type="match status" value="1"/>
</dbReference>
<dbReference type="Gene3D" id="1.10.510.10">
    <property type="entry name" value="Transferase(Phosphotransferase) domain 1"/>
    <property type="match status" value="1"/>
</dbReference>
<dbReference type="InterPro" id="IPR045381">
    <property type="entry name" value="BRI1_island_dom"/>
</dbReference>
<dbReference type="InterPro" id="IPR011009">
    <property type="entry name" value="Kinase-like_dom_sf"/>
</dbReference>
<dbReference type="InterPro" id="IPR001611">
    <property type="entry name" value="Leu-rich_rpt"/>
</dbReference>
<dbReference type="InterPro" id="IPR003591">
    <property type="entry name" value="Leu-rich_rpt_typical-subtyp"/>
</dbReference>
<dbReference type="InterPro" id="IPR032675">
    <property type="entry name" value="LRR_dom_sf"/>
</dbReference>
<dbReference type="InterPro" id="IPR050647">
    <property type="entry name" value="Plant_LRR-RLKs"/>
</dbReference>
<dbReference type="InterPro" id="IPR000719">
    <property type="entry name" value="Prot_kinase_dom"/>
</dbReference>
<dbReference type="InterPro" id="IPR017441">
    <property type="entry name" value="Protein_kinase_ATP_BS"/>
</dbReference>
<dbReference type="InterPro" id="IPR008271">
    <property type="entry name" value="Ser/Thr_kinase_AS"/>
</dbReference>
<dbReference type="PANTHER" id="PTHR48056">
    <property type="entry name" value="LRR RECEPTOR-LIKE SERINE/THREONINE-PROTEIN KINASE-RELATED"/>
    <property type="match status" value="1"/>
</dbReference>
<dbReference type="PANTHER" id="PTHR48056:SF18">
    <property type="entry name" value="NON-SPECIFIC SERINE_THREONINE PROTEIN KINASE"/>
    <property type="match status" value="1"/>
</dbReference>
<dbReference type="Pfam" id="PF20141">
    <property type="entry name" value="Island"/>
    <property type="match status" value="1"/>
</dbReference>
<dbReference type="Pfam" id="PF00560">
    <property type="entry name" value="LRR_1"/>
    <property type="match status" value="1"/>
</dbReference>
<dbReference type="Pfam" id="PF13855">
    <property type="entry name" value="LRR_8"/>
    <property type="match status" value="5"/>
</dbReference>
<dbReference type="Pfam" id="PF00069">
    <property type="entry name" value="Pkinase"/>
    <property type="match status" value="1"/>
</dbReference>
<dbReference type="SMART" id="SM00369">
    <property type="entry name" value="LRR_TYP"/>
    <property type="match status" value="5"/>
</dbReference>
<dbReference type="SMART" id="SM00220">
    <property type="entry name" value="S_TKc"/>
    <property type="match status" value="1"/>
</dbReference>
<dbReference type="SUPFAM" id="SSF52058">
    <property type="entry name" value="L domain-like"/>
    <property type="match status" value="2"/>
</dbReference>
<dbReference type="SUPFAM" id="SSF56112">
    <property type="entry name" value="Protein kinase-like (PK-like)"/>
    <property type="match status" value="1"/>
</dbReference>
<dbReference type="PROSITE" id="PS51450">
    <property type="entry name" value="LRR"/>
    <property type="match status" value="17"/>
</dbReference>
<dbReference type="PROSITE" id="PS00107">
    <property type="entry name" value="PROTEIN_KINASE_ATP"/>
    <property type="match status" value="1"/>
</dbReference>
<dbReference type="PROSITE" id="PS50011">
    <property type="entry name" value="PROTEIN_KINASE_DOM"/>
    <property type="match status" value="1"/>
</dbReference>
<dbReference type="PROSITE" id="PS00108">
    <property type="entry name" value="PROTEIN_KINASE_ST"/>
    <property type="match status" value="1"/>
</dbReference>
<proteinExistence type="evidence at protein level"/>